<gene>
    <name type="ordered locus">BAB2_0673</name>
</gene>
<feature type="signal peptide" evidence="2">
    <location>
        <begin position="1"/>
        <end position="17"/>
    </location>
</feature>
<feature type="chain" id="PRO_0000412071" description="Purine-binding protein BAB2_0673">
    <location>
        <begin position="18"/>
        <end position="350"/>
    </location>
</feature>
<feature type="binding site">
    <location>
        <position position="36"/>
    </location>
    <ligand>
        <name>adenine</name>
        <dbReference type="ChEBI" id="CHEBI:16708"/>
    </ligand>
</feature>
<feature type="binding site">
    <location>
        <position position="185"/>
    </location>
    <ligand>
        <name>adenine</name>
        <dbReference type="ChEBI" id="CHEBI:16708"/>
    </ligand>
</feature>
<feature type="binding site">
    <location>
        <position position="211"/>
    </location>
    <ligand>
        <name>adenine</name>
        <dbReference type="ChEBI" id="CHEBI:16708"/>
    </ligand>
</feature>
<feature type="strand" evidence="4">
    <location>
        <begin position="21"/>
        <end position="26"/>
    </location>
</feature>
<feature type="helix" evidence="4">
    <location>
        <begin position="31"/>
        <end position="33"/>
    </location>
</feature>
<feature type="helix" evidence="4">
    <location>
        <begin position="36"/>
        <end position="51"/>
    </location>
</feature>
<feature type="turn" evidence="4">
    <location>
        <begin position="52"/>
        <end position="54"/>
    </location>
</feature>
<feature type="strand" evidence="4">
    <location>
        <begin position="55"/>
        <end position="60"/>
    </location>
</feature>
<feature type="helix" evidence="4">
    <location>
        <begin position="67"/>
        <end position="78"/>
    </location>
</feature>
<feature type="strand" evidence="4">
    <location>
        <begin position="82"/>
        <end position="86"/>
    </location>
</feature>
<feature type="helix" evidence="4">
    <location>
        <begin position="89"/>
        <end position="91"/>
    </location>
</feature>
<feature type="helix" evidence="4">
    <location>
        <begin position="92"/>
        <end position="99"/>
    </location>
</feature>
<feature type="strand" evidence="4">
    <location>
        <begin position="105"/>
        <end position="111"/>
    </location>
</feature>
<feature type="strand" evidence="4">
    <location>
        <begin position="119"/>
        <end position="124"/>
    </location>
</feature>
<feature type="helix" evidence="4">
    <location>
        <begin position="126"/>
        <end position="140"/>
    </location>
</feature>
<feature type="strand" evidence="4">
    <location>
        <begin position="145"/>
        <end position="150"/>
    </location>
</feature>
<feature type="helix" evidence="4">
    <location>
        <begin position="155"/>
        <end position="169"/>
    </location>
</feature>
<feature type="strand" evidence="4">
    <location>
        <begin position="176"/>
        <end position="181"/>
    </location>
</feature>
<feature type="strand" evidence="4">
    <location>
        <begin position="183"/>
        <end position="185"/>
    </location>
</feature>
<feature type="helix" evidence="4">
    <location>
        <begin position="188"/>
        <end position="200"/>
    </location>
</feature>
<feature type="strand" evidence="4">
    <location>
        <begin position="204"/>
        <end position="213"/>
    </location>
</feature>
<feature type="helix" evidence="4">
    <location>
        <begin position="214"/>
        <end position="221"/>
    </location>
</feature>
<feature type="strand" evidence="4">
    <location>
        <begin position="225"/>
        <end position="231"/>
    </location>
</feature>
<feature type="helix" evidence="4">
    <location>
        <begin position="234"/>
        <end position="236"/>
    </location>
</feature>
<feature type="turn" evidence="4">
    <location>
        <begin position="238"/>
        <end position="240"/>
    </location>
</feature>
<feature type="strand" evidence="4">
    <location>
        <begin position="241"/>
        <end position="247"/>
    </location>
</feature>
<feature type="helix" evidence="4">
    <location>
        <begin position="250"/>
        <end position="261"/>
    </location>
</feature>
<feature type="strand" evidence="4">
    <location>
        <begin position="269"/>
        <end position="272"/>
    </location>
</feature>
<feature type="turn" evidence="4">
    <location>
        <begin position="274"/>
        <end position="277"/>
    </location>
</feature>
<feature type="strand" evidence="4">
    <location>
        <begin position="278"/>
        <end position="281"/>
    </location>
</feature>
<feature type="helix" evidence="4">
    <location>
        <begin position="289"/>
        <end position="303"/>
    </location>
</feature>
<feature type="strand" evidence="4">
    <location>
        <begin position="309"/>
        <end position="316"/>
    </location>
</feature>
<feature type="strand" evidence="4">
    <location>
        <begin position="321"/>
        <end position="323"/>
    </location>
</feature>
<feature type="helix" evidence="4">
    <location>
        <begin position="331"/>
        <end position="335"/>
    </location>
</feature>
<sequence>MVIATVAGFMLGGAAHAEEKLKVGFIYIGPPGDFGWTYQHDQARKELVEALGDKVETTFLENVAEGADAERSIKRIARAGNKLIFTTSFGYMDPTVKVAKKFPDVKFEHATGYKTADNMSAYNARFYEGRYVQGVIAAKMSKKGIAGYIGSVPVPEVVQGINSFMLGAQSVNPDFRVKVIWVNSWFDPGKEADAAKALIDQGVDIITQHTDSTAAIQVAHDRGIKAFGQASDMIKFAPDTQLTAVVDEWGPYYIDRAKAVLDGTWKSQNIWWGMKEGLVKMAPFTNMPDDVKKLAEETEARIKSGELNPFTGPIKKQDGSEWLKAGEKADDQTLLGMNFYVAGVDDKLPQ</sequence>
<name>PBP_BRUA2</name>
<evidence type="ECO:0000250" key="1"/>
<evidence type="ECO:0000255" key="2"/>
<evidence type="ECO:0000305" key="3"/>
<evidence type="ECO:0007829" key="4">
    <source>
        <dbReference type="PDB" id="3S99"/>
    </source>
</evidence>
<proteinExistence type="evidence at protein level"/>
<organism>
    <name type="scientific">Brucella abortus (strain 2308)</name>
    <dbReference type="NCBI Taxonomy" id="359391"/>
    <lineage>
        <taxon>Bacteria</taxon>
        <taxon>Pseudomonadati</taxon>
        <taxon>Pseudomonadota</taxon>
        <taxon>Alphaproteobacteria</taxon>
        <taxon>Hyphomicrobiales</taxon>
        <taxon>Brucellaceae</taxon>
        <taxon>Brucella/Ochrobactrum group</taxon>
        <taxon>Brucella</taxon>
    </lineage>
</organism>
<comment type="function">
    <text evidence="1">Binds adenine and probably also other purines, such as guanine. May play a role in adenine and guanine uptake. May be part of an ABC-type uptake system for adenine and similar ligands (By similarity).</text>
</comment>
<comment type="similarity">
    <text evidence="3">Belongs to the BMP lipoprotein family.</text>
</comment>
<comment type="caution">
    <text evidence="3">Lacks the conserved Cys that is essential for lipidation.</text>
</comment>
<keyword id="KW-0002">3D-structure</keyword>
<keyword id="KW-1185">Reference proteome</keyword>
<keyword id="KW-0732">Signal</keyword>
<reference key="1">
    <citation type="journal article" date="2005" name="Infect. Immun.">
        <title>Whole-genome analyses of speciation events in pathogenic Brucellae.</title>
        <authorList>
            <person name="Chain P.S."/>
            <person name="Comerci D.J."/>
            <person name="Tolmasky M.E."/>
            <person name="Larimer F.W."/>
            <person name="Malfatti S.A."/>
            <person name="Vergez L.M."/>
            <person name="Aguero F."/>
            <person name="Land M.L."/>
            <person name="Ugalde R.A."/>
            <person name="Garcia E."/>
        </authorList>
    </citation>
    <scope>NUCLEOTIDE SEQUENCE [LARGE SCALE GENOMIC DNA]</scope>
    <source>
        <strain>2308</strain>
    </source>
</reference>
<accession>Q2YKI6</accession>
<protein>
    <recommendedName>
        <fullName>Purine-binding protein BAB2_0673</fullName>
    </recommendedName>
</protein>
<dbReference type="EMBL" id="AM040265">
    <property type="protein sequence ID" value="CAJ12839.1"/>
    <property type="molecule type" value="Genomic_DNA"/>
</dbReference>
<dbReference type="PDB" id="3S99">
    <property type="method" value="X-ray"/>
    <property type="resolution" value="2.05 A"/>
    <property type="chains" value="A=17-350"/>
</dbReference>
<dbReference type="PDBsum" id="3S99"/>
<dbReference type="SMR" id="Q2YKI6"/>
<dbReference type="STRING" id="359391.BAB2_0673"/>
<dbReference type="KEGG" id="bmf:BAB2_0673"/>
<dbReference type="PATRIC" id="fig|359391.11.peg.2857"/>
<dbReference type="HOGENOM" id="CLU_038813_2_0_5"/>
<dbReference type="EvolutionaryTrace" id="Q2YKI6"/>
<dbReference type="Proteomes" id="UP000002719">
    <property type="component" value="Chromosome II"/>
</dbReference>
<dbReference type="GO" id="GO:0005886">
    <property type="term" value="C:plasma membrane"/>
    <property type="evidence" value="ECO:0007669"/>
    <property type="project" value="InterPro"/>
</dbReference>
<dbReference type="CDD" id="cd19963">
    <property type="entry name" value="PBP1_BMP-like"/>
    <property type="match status" value="1"/>
</dbReference>
<dbReference type="Gene3D" id="3.40.50.2300">
    <property type="match status" value="2"/>
</dbReference>
<dbReference type="InterPro" id="IPR052910">
    <property type="entry name" value="ABC-Purine-Binding"/>
</dbReference>
<dbReference type="InterPro" id="IPR003760">
    <property type="entry name" value="PnrA-like"/>
</dbReference>
<dbReference type="PANTHER" id="PTHR43208">
    <property type="entry name" value="ABC TRANSPORTER SUBSTRATE-BINDING PROTEIN"/>
    <property type="match status" value="1"/>
</dbReference>
<dbReference type="PANTHER" id="PTHR43208:SF1">
    <property type="entry name" value="ABC TRANSPORTER SUBSTRATE-BINDING PROTEIN"/>
    <property type="match status" value="1"/>
</dbReference>
<dbReference type="Pfam" id="PF02608">
    <property type="entry name" value="Bmp"/>
    <property type="match status" value="1"/>
</dbReference>